<reference key="1">
    <citation type="journal article" date="2006" name="J. Bacteriol.">
        <title>Complete genome sequence of Yersinia pestis strains Antiqua and Nepal516: evidence of gene reduction in an emerging pathogen.</title>
        <authorList>
            <person name="Chain P.S.G."/>
            <person name="Hu P."/>
            <person name="Malfatti S.A."/>
            <person name="Radnedge L."/>
            <person name="Larimer F."/>
            <person name="Vergez L.M."/>
            <person name="Worsham P."/>
            <person name="Chu M.C."/>
            <person name="Andersen G.L."/>
        </authorList>
    </citation>
    <scope>NUCLEOTIDE SEQUENCE [LARGE SCALE GENOMIC DNA]</scope>
    <source>
        <strain>Nepal516</strain>
    </source>
</reference>
<reference key="2">
    <citation type="submission" date="2009-04" db="EMBL/GenBank/DDBJ databases">
        <title>Yersinia pestis Nepal516A whole genome shotgun sequencing project.</title>
        <authorList>
            <person name="Plunkett G. III"/>
            <person name="Anderson B.D."/>
            <person name="Baumler D.J."/>
            <person name="Burland V."/>
            <person name="Cabot E.L."/>
            <person name="Glasner J.D."/>
            <person name="Mau B."/>
            <person name="Neeno-Eckwall E."/>
            <person name="Perna N.T."/>
            <person name="Munk A.C."/>
            <person name="Tapia R."/>
            <person name="Green L.D."/>
            <person name="Rogers Y.C."/>
            <person name="Detter J.C."/>
            <person name="Bruce D.C."/>
            <person name="Brettin T.S."/>
        </authorList>
    </citation>
    <scope>NUCLEOTIDE SEQUENCE [LARGE SCALE GENOMIC DNA]</scope>
    <source>
        <strain>Nepal516</strain>
    </source>
</reference>
<comment type="function">
    <text evidence="1">Cell wall formation. Catalyzes the transfer of a GlcNAc subunit on undecaprenyl-pyrophosphoryl-MurNAc-pentapeptide (lipid intermediate I) to form undecaprenyl-pyrophosphoryl-MurNAc-(pentapeptide)GlcNAc (lipid intermediate II).</text>
</comment>
<comment type="catalytic activity">
    <reaction evidence="1">
        <text>di-trans,octa-cis-undecaprenyl diphospho-N-acetyl-alpha-D-muramoyl-L-alanyl-D-glutamyl-meso-2,6-diaminopimeloyl-D-alanyl-D-alanine + UDP-N-acetyl-alpha-D-glucosamine = di-trans,octa-cis-undecaprenyl diphospho-[N-acetyl-alpha-D-glucosaminyl-(1-&gt;4)]-N-acetyl-alpha-D-muramoyl-L-alanyl-D-glutamyl-meso-2,6-diaminopimeloyl-D-alanyl-D-alanine + UDP + H(+)</text>
        <dbReference type="Rhea" id="RHEA:31227"/>
        <dbReference type="ChEBI" id="CHEBI:15378"/>
        <dbReference type="ChEBI" id="CHEBI:57705"/>
        <dbReference type="ChEBI" id="CHEBI:58223"/>
        <dbReference type="ChEBI" id="CHEBI:61387"/>
        <dbReference type="ChEBI" id="CHEBI:61388"/>
        <dbReference type="EC" id="2.4.1.227"/>
    </reaction>
</comment>
<comment type="pathway">
    <text evidence="1">Cell wall biogenesis; peptidoglycan biosynthesis.</text>
</comment>
<comment type="subcellular location">
    <subcellularLocation>
        <location evidence="1">Cell inner membrane</location>
        <topology evidence="1">Peripheral membrane protein</topology>
        <orientation evidence="1">Cytoplasmic side</orientation>
    </subcellularLocation>
</comment>
<comment type="similarity">
    <text evidence="1">Belongs to the glycosyltransferase 28 family. MurG subfamily.</text>
</comment>
<name>MURG_YERPN</name>
<gene>
    <name evidence="1" type="primary">murG</name>
    <name type="ordered locus">YPN_0421</name>
    <name type="ORF">YP516_0435</name>
</gene>
<sequence length="356" mass="37774">MSGKTKRLMVMAGGTGGHVFPGLAVAHHLMAQGWQVRWLGTADRMEASLVPQHGIEIDFIKISGLRGKGLMAQLTAPIRIYRAVRQAQKIMRDYQPNVVLGMGGYVSGPGGLAAWLCGVPVVLHEQNGIAGLTNRWLARIAKKVLQAFPGAFPNADVVGNPVRTDVLALPLPAVRLSGREGPIRVLVIGGSQGARILNQTLPLVAASLGEQITLWHQVGKGALPEVSQAYQQAGQAGHLVVEFIDDMAAAYAWADVVVCRSGALTVSEVAAAGLPAIFVPFQHKDRQQYWNALPLEKAGAAKIIEQPQFTATSVSSLLASWDRATLLSMAERARSVAIPDATERVAAEVVAASKSA</sequence>
<proteinExistence type="inferred from homology"/>
<dbReference type="EC" id="2.4.1.227" evidence="1"/>
<dbReference type="EMBL" id="CP000305">
    <property type="protein sequence ID" value="ABG16753.1"/>
    <property type="molecule type" value="Genomic_DNA"/>
</dbReference>
<dbReference type="EMBL" id="ACNQ01000006">
    <property type="protein sequence ID" value="EEO78209.1"/>
    <property type="molecule type" value="Genomic_DNA"/>
</dbReference>
<dbReference type="RefSeq" id="WP_002210434.1">
    <property type="nucleotide sequence ID" value="NZ_ACNQ01000006.1"/>
</dbReference>
<dbReference type="SMR" id="Q1CMM7"/>
<dbReference type="CAZy" id="GT28">
    <property type="family name" value="Glycosyltransferase Family 28"/>
</dbReference>
<dbReference type="GeneID" id="57974060"/>
<dbReference type="KEGG" id="ypn:YPN_0421"/>
<dbReference type="HOGENOM" id="CLU_037404_2_0_6"/>
<dbReference type="UniPathway" id="UPA00219"/>
<dbReference type="Proteomes" id="UP000008936">
    <property type="component" value="Chromosome"/>
</dbReference>
<dbReference type="GO" id="GO:0005886">
    <property type="term" value="C:plasma membrane"/>
    <property type="evidence" value="ECO:0007669"/>
    <property type="project" value="UniProtKB-SubCell"/>
</dbReference>
<dbReference type="GO" id="GO:0051991">
    <property type="term" value="F:UDP-N-acetyl-D-glucosamine:N-acetylmuramoyl-L-alanyl-D-glutamyl-meso-2,6-diaminopimelyl-D-alanyl-D-alanine-diphosphoundecaprenol 4-beta-N-acetylglucosaminlytransferase activity"/>
    <property type="evidence" value="ECO:0007669"/>
    <property type="project" value="RHEA"/>
</dbReference>
<dbReference type="GO" id="GO:0050511">
    <property type="term" value="F:undecaprenyldiphospho-muramoylpentapeptide beta-N-acetylglucosaminyltransferase activity"/>
    <property type="evidence" value="ECO:0007669"/>
    <property type="project" value="UniProtKB-UniRule"/>
</dbReference>
<dbReference type="GO" id="GO:0005975">
    <property type="term" value="P:carbohydrate metabolic process"/>
    <property type="evidence" value="ECO:0007669"/>
    <property type="project" value="InterPro"/>
</dbReference>
<dbReference type="GO" id="GO:0051301">
    <property type="term" value="P:cell division"/>
    <property type="evidence" value="ECO:0007669"/>
    <property type="project" value="UniProtKB-KW"/>
</dbReference>
<dbReference type="GO" id="GO:0071555">
    <property type="term" value="P:cell wall organization"/>
    <property type="evidence" value="ECO:0007669"/>
    <property type="project" value="UniProtKB-KW"/>
</dbReference>
<dbReference type="GO" id="GO:0030259">
    <property type="term" value="P:lipid glycosylation"/>
    <property type="evidence" value="ECO:0007669"/>
    <property type="project" value="UniProtKB-UniRule"/>
</dbReference>
<dbReference type="GO" id="GO:0009252">
    <property type="term" value="P:peptidoglycan biosynthetic process"/>
    <property type="evidence" value="ECO:0007669"/>
    <property type="project" value="UniProtKB-UniRule"/>
</dbReference>
<dbReference type="GO" id="GO:0008360">
    <property type="term" value="P:regulation of cell shape"/>
    <property type="evidence" value="ECO:0007669"/>
    <property type="project" value="UniProtKB-KW"/>
</dbReference>
<dbReference type="CDD" id="cd03785">
    <property type="entry name" value="GT28_MurG"/>
    <property type="match status" value="1"/>
</dbReference>
<dbReference type="FunFam" id="3.40.50.2000:FF:000016">
    <property type="entry name" value="UDP-N-acetylglucosamine--N-acetylmuramyl-(pentapeptide) pyrophosphoryl-undecaprenol N-acetylglucosamine transferase"/>
    <property type="match status" value="1"/>
</dbReference>
<dbReference type="FunFam" id="3.40.50.2000:FF:000018">
    <property type="entry name" value="UDP-N-acetylglucosamine--N-acetylmuramyl-(pentapeptide) pyrophosphoryl-undecaprenol N-acetylglucosamine transferase"/>
    <property type="match status" value="1"/>
</dbReference>
<dbReference type="Gene3D" id="3.40.50.2000">
    <property type="entry name" value="Glycogen Phosphorylase B"/>
    <property type="match status" value="2"/>
</dbReference>
<dbReference type="HAMAP" id="MF_00033">
    <property type="entry name" value="MurG"/>
    <property type="match status" value="1"/>
</dbReference>
<dbReference type="InterPro" id="IPR006009">
    <property type="entry name" value="GlcNAc_MurG"/>
</dbReference>
<dbReference type="InterPro" id="IPR007235">
    <property type="entry name" value="Glyco_trans_28_C"/>
</dbReference>
<dbReference type="InterPro" id="IPR004276">
    <property type="entry name" value="GlycoTrans_28_N"/>
</dbReference>
<dbReference type="NCBIfam" id="TIGR01133">
    <property type="entry name" value="murG"/>
    <property type="match status" value="1"/>
</dbReference>
<dbReference type="PANTHER" id="PTHR21015:SF22">
    <property type="entry name" value="GLYCOSYLTRANSFERASE"/>
    <property type="match status" value="1"/>
</dbReference>
<dbReference type="PANTHER" id="PTHR21015">
    <property type="entry name" value="UDP-N-ACETYLGLUCOSAMINE--N-ACETYLMURAMYL-(PENTAPEPTIDE) PYROPHOSPHORYL-UNDECAPRENOL N-ACETYLGLUCOSAMINE TRANSFERASE 1"/>
    <property type="match status" value="1"/>
</dbReference>
<dbReference type="Pfam" id="PF04101">
    <property type="entry name" value="Glyco_tran_28_C"/>
    <property type="match status" value="1"/>
</dbReference>
<dbReference type="Pfam" id="PF03033">
    <property type="entry name" value="Glyco_transf_28"/>
    <property type="match status" value="1"/>
</dbReference>
<dbReference type="SUPFAM" id="SSF53756">
    <property type="entry name" value="UDP-Glycosyltransferase/glycogen phosphorylase"/>
    <property type="match status" value="1"/>
</dbReference>
<organism>
    <name type="scientific">Yersinia pestis bv. Antiqua (strain Nepal516)</name>
    <dbReference type="NCBI Taxonomy" id="377628"/>
    <lineage>
        <taxon>Bacteria</taxon>
        <taxon>Pseudomonadati</taxon>
        <taxon>Pseudomonadota</taxon>
        <taxon>Gammaproteobacteria</taxon>
        <taxon>Enterobacterales</taxon>
        <taxon>Yersiniaceae</taxon>
        <taxon>Yersinia</taxon>
    </lineage>
</organism>
<keyword id="KW-0131">Cell cycle</keyword>
<keyword id="KW-0132">Cell division</keyword>
<keyword id="KW-0997">Cell inner membrane</keyword>
<keyword id="KW-1003">Cell membrane</keyword>
<keyword id="KW-0133">Cell shape</keyword>
<keyword id="KW-0961">Cell wall biogenesis/degradation</keyword>
<keyword id="KW-0328">Glycosyltransferase</keyword>
<keyword id="KW-0472">Membrane</keyword>
<keyword id="KW-0573">Peptidoglycan synthesis</keyword>
<keyword id="KW-0808">Transferase</keyword>
<protein>
    <recommendedName>
        <fullName evidence="1">UDP-N-acetylglucosamine--N-acetylmuramyl-(pentapeptide) pyrophosphoryl-undecaprenol N-acetylglucosamine transferase</fullName>
        <ecNumber evidence="1">2.4.1.227</ecNumber>
    </recommendedName>
    <alternativeName>
        <fullName evidence="1">Undecaprenyl-PP-MurNAc-pentapeptide-UDPGlcNAc GlcNAc transferase</fullName>
    </alternativeName>
</protein>
<feature type="chain" id="PRO_1000002705" description="UDP-N-acetylglucosamine--N-acetylmuramyl-(pentapeptide) pyrophosphoryl-undecaprenol N-acetylglucosamine transferase">
    <location>
        <begin position="1"/>
        <end position="356"/>
    </location>
</feature>
<feature type="binding site" evidence="1">
    <location>
        <begin position="15"/>
        <end position="17"/>
    </location>
    <ligand>
        <name>UDP-N-acetyl-alpha-D-glucosamine</name>
        <dbReference type="ChEBI" id="CHEBI:57705"/>
    </ligand>
</feature>
<feature type="binding site" evidence="1">
    <location>
        <position position="127"/>
    </location>
    <ligand>
        <name>UDP-N-acetyl-alpha-D-glucosamine</name>
        <dbReference type="ChEBI" id="CHEBI:57705"/>
    </ligand>
</feature>
<feature type="binding site" evidence="1">
    <location>
        <position position="163"/>
    </location>
    <ligand>
        <name>UDP-N-acetyl-alpha-D-glucosamine</name>
        <dbReference type="ChEBI" id="CHEBI:57705"/>
    </ligand>
</feature>
<feature type="binding site" evidence="1">
    <location>
        <position position="191"/>
    </location>
    <ligand>
        <name>UDP-N-acetyl-alpha-D-glucosamine</name>
        <dbReference type="ChEBI" id="CHEBI:57705"/>
    </ligand>
</feature>
<feature type="binding site" evidence="1">
    <location>
        <position position="244"/>
    </location>
    <ligand>
        <name>UDP-N-acetyl-alpha-D-glucosamine</name>
        <dbReference type="ChEBI" id="CHEBI:57705"/>
    </ligand>
</feature>
<feature type="binding site" evidence="1">
    <location>
        <begin position="263"/>
        <end position="268"/>
    </location>
    <ligand>
        <name>UDP-N-acetyl-alpha-D-glucosamine</name>
        <dbReference type="ChEBI" id="CHEBI:57705"/>
    </ligand>
</feature>
<feature type="binding site" evidence="1">
    <location>
        <position position="288"/>
    </location>
    <ligand>
        <name>UDP-N-acetyl-alpha-D-glucosamine</name>
        <dbReference type="ChEBI" id="CHEBI:57705"/>
    </ligand>
</feature>
<evidence type="ECO:0000255" key="1">
    <source>
        <dbReference type="HAMAP-Rule" id="MF_00033"/>
    </source>
</evidence>
<accession>Q1CMM7</accession>
<accession>C4GNX7</accession>